<name>PLYA_PAEBA</name>
<keyword id="KW-0106">Calcium</keyword>
<keyword id="KW-0456">Lyase</keyword>
<keyword id="KW-0479">Metal-binding</keyword>
<keyword id="KW-0964">Secreted</keyword>
<keyword id="KW-0732">Signal</keyword>
<dbReference type="EC" id="4.2.2.2"/>
<dbReference type="EC" id="4.2.2.10"/>
<dbReference type="EMBL" id="AJ237980">
    <property type="protein sequence ID" value="CAB40884.1"/>
    <property type="molecule type" value="Genomic_DNA"/>
</dbReference>
<dbReference type="RefSeq" id="WP_174812328.1">
    <property type="nucleotide sequence ID" value="NZ_CP054614.1"/>
</dbReference>
<dbReference type="SMR" id="Q9X6Z2"/>
<dbReference type="CAZy" id="PL3">
    <property type="family name" value="Polysaccharide Lyase Family 3"/>
</dbReference>
<dbReference type="UniPathway" id="UPA00545">
    <property type="reaction ID" value="UER00824"/>
</dbReference>
<dbReference type="GO" id="GO:0005576">
    <property type="term" value="C:extracellular region"/>
    <property type="evidence" value="ECO:0007669"/>
    <property type="project" value="UniProtKB-SubCell"/>
</dbReference>
<dbReference type="GO" id="GO:0046872">
    <property type="term" value="F:metal ion binding"/>
    <property type="evidence" value="ECO:0007669"/>
    <property type="project" value="UniProtKB-KW"/>
</dbReference>
<dbReference type="GO" id="GO:0030570">
    <property type="term" value="F:pectate lyase activity"/>
    <property type="evidence" value="ECO:0007669"/>
    <property type="project" value="UniProtKB-EC"/>
</dbReference>
<dbReference type="GO" id="GO:0047490">
    <property type="term" value="F:pectin lyase activity"/>
    <property type="evidence" value="ECO:0007669"/>
    <property type="project" value="UniProtKB-EC"/>
</dbReference>
<dbReference type="GO" id="GO:0045490">
    <property type="term" value="P:pectin catabolic process"/>
    <property type="evidence" value="ECO:0007669"/>
    <property type="project" value="UniProtKB-UniPathway"/>
</dbReference>
<dbReference type="FunFam" id="2.160.20.10:FF:000044">
    <property type="entry name" value="Pectate lyase E"/>
    <property type="match status" value="1"/>
</dbReference>
<dbReference type="Gene3D" id="2.160.20.10">
    <property type="entry name" value="Single-stranded right-handed beta-helix, Pectin lyase-like"/>
    <property type="match status" value="1"/>
</dbReference>
<dbReference type="InterPro" id="IPR004898">
    <property type="entry name" value="Pectate_lyase_PlyH/PlyE-like"/>
</dbReference>
<dbReference type="InterPro" id="IPR012334">
    <property type="entry name" value="Pectin_lyas_fold"/>
</dbReference>
<dbReference type="InterPro" id="IPR011050">
    <property type="entry name" value="Pectin_lyase_fold/virulence"/>
</dbReference>
<dbReference type="PANTHER" id="PTHR33407">
    <property type="entry name" value="PECTATE LYASE F-RELATED"/>
    <property type="match status" value="1"/>
</dbReference>
<dbReference type="PANTHER" id="PTHR33407:SF9">
    <property type="entry name" value="PECTATE LYASE F-RELATED"/>
    <property type="match status" value="1"/>
</dbReference>
<dbReference type="Pfam" id="PF03211">
    <property type="entry name" value="Pectate_lyase"/>
    <property type="match status" value="1"/>
</dbReference>
<dbReference type="SUPFAM" id="SSF51126">
    <property type="entry name" value="Pectin lyase-like"/>
    <property type="match status" value="1"/>
</dbReference>
<organism>
    <name type="scientific">Paenibacillus barcinonensis</name>
    <dbReference type="NCBI Taxonomy" id="198119"/>
    <lineage>
        <taxon>Bacteria</taxon>
        <taxon>Bacillati</taxon>
        <taxon>Bacillota</taxon>
        <taxon>Bacilli</taxon>
        <taxon>Bacillales</taxon>
        <taxon>Paenibacillaceae</taxon>
        <taxon>Paenibacillus</taxon>
    </lineage>
</organism>
<protein>
    <recommendedName>
        <fullName>Pectate lyase A</fullName>
        <ecNumber>4.2.2.2</ecNumber>
    </recommendedName>
    <alternativeName>
        <fullName>Pectin lyase</fullName>
        <ecNumber>4.2.2.10</ecNumber>
    </alternativeName>
</protein>
<reference key="1">
    <citation type="journal article" date="2000" name="Microbiology">
        <title>An unusual pectate lyase from a Bacillus sp. with high activity on pectin: cloning and characterization.</title>
        <authorList>
            <person name="Soriano M."/>
            <person name="Blanco A."/>
            <person name="Diaz P."/>
            <person name="Pastor F.I.J."/>
        </authorList>
    </citation>
    <scope>NUCLEOTIDE SEQUENCE [GENOMIC DNA]</scope>
    <scope>FUNCTION</scope>
    <scope>SUBSTRATE SPECIFICITY</scope>
    <scope>COFACTOR</scope>
    <scope>ACTIVITY REGULATION</scope>
    <scope>BIOPHYSICOCHEMICAL PROPERTIES</scope>
    <source>
        <strain>DSM 15478 / BCRC 17560 / CECT 7022 / CIP 108718 / BP-23</strain>
    </source>
</reference>
<reference key="2">
    <citation type="journal article" date="2006" name="Microbiology">
        <title>Pectate lyase C from Bacillus subtilis: a novel endo-cleaving enzyme with activity on highly methylated pectin.</title>
        <authorList>
            <person name="Soriano M."/>
            <person name="Diaz P."/>
            <person name="Pastor F.I.J."/>
        </authorList>
    </citation>
    <scope>FUNCTION</scope>
    <scope>SUBSTRATE SPECIFICITY</scope>
    <scope>COFACTOR</scope>
    <scope>BIOPHYSICOCHEMICAL PROPERTIES</scope>
    <source>
        <strain>DSM 15478 / BCRC 17560 / CECT 7022 / CIP 108718 / BP-23</strain>
    </source>
</reference>
<accession>Q9X6Z2</accession>
<sequence length="222" mass="23233">MKKMLTLLLSAGLVASIFGVMPAAAAPTVVNSTIVVPKGTTYDGQGKTFVANPSTLGDGSQAENQKPVFRLEAGATLKNVIIGAPAADGVHCYGSCNISNVVWEDVGEDALTLKSSGTVNITGGAAYKAYDKVFQMNASGTINIKNFRADDIGKLVRQNGGTSYAVNMTLDNSNISNVKDSIMRTDSSVSQGKITNTRYSKVPTLFKGFASGKTSQSGNTQY</sequence>
<proteinExistence type="evidence at protein level"/>
<evidence type="ECO:0000250" key="1"/>
<evidence type="ECO:0000255" key="2"/>
<evidence type="ECO:0000269" key="3">
    <source>
    </source>
</evidence>
<evidence type="ECO:0000269" key="4">
    <source>
    </source>
</evidence>
<evidence type="ECO:0000305" key="5"/>
<gene>
    <name type="primary">pelA</name>
</gene>
<comment type="function">
    <text evidence="3 4">Catalyzes the depolymerization of both polygalacturonate and pectins of methyl esterification degree from 22 to 89%, with an endo mode of action. In contrast to the majority of pectate lyases, displays high activity on highly methylated pectins. Is not able to cleave trigalacturonate. Does not degrade xylans and carboxymethylcellulose (CMC).</text>
</comment>
<comment type="catalytic activity">
    <reaction>
        <text>Eliminative cleavage of (1-&gt;4)-alpha-D-galacturonan to give oligosaccharides with 4-deoxy-alpha-D-galact-4-enuronosyl groups at their non-reducing ends.</text>
        <dbReference type="EC" id="4.2.2.2"/>
    </reaction>
</comment>
<comment type="catalytic activity">
    <reaction>
        <text>Eliminative cleavage of (1-&gt;4)-alpha-D-galacturonan methyl ester to give oligosaccharides with 4-deoxy-6-O-methyl-alpha-D-galact-4-enuronosyl groups at their non-reducing ends.</text>
        <dbReference type="EC" id="4.2.2.10"/>
    </reaction>
</comment>
<comment type="cofactor">
    <cofactor evidence="3 4">
        <name>Ca(2+)</name>
        <dbReference type="ChEBI" id="CHEBI:29108"/>
    </cofactor>
    <text evidence="3 4">Binds 1 Ca(2+) ion per subunit.</text>
</comment>
<comment type="activity regulation">
    <text evidence="3">Strongly inhibited by Ba(2+). To a lesser extent, is also inhibited by Sn(2+), Mg(2+) and Ag(+). Inhibited by EDTA in vitro.</text>
</comment>
<comment type="biophysicochemical properties">
    <kinetics>
        <Vmax evidence="3 4">102.4 umol/min/mg enzyme with 22% esterified pectin as substrate</Vmax>
        <Vmax evidence="3 4">95.4 umol/min/mg enzyme with polygalacturonic acid as substrate</Vmax>
    </kinetics>
    <phDependence>
        <text evidence="3 4">Optimum pH is 10. Is stable for 1 hour at 40 degrees Celsius in the pH range 4.0-8.0.</text>
    </phDependence>
    <temperatureDependence>
        <text evidence="3 4">Optimum temperature is 50-55 degrees Celsius. More than 50% of maximum activity is found in the temperature range 40-60 degrees Celsius. Retains more than 50% of the initial activity after 4 hours incubation at 40 degrees Celsius at pH 10, while at 50 degrees Celsius only 1% of the initial activity is found after the same treatment.</text>
    </temperatureDependence>
</comment>
<comment type="pathway">
    <text>Glycan metabolism; pectin degradation; 2-dehydro-3-deoxy-D-gluconate from pectin: step 2/5.</text>
</comment>
<comment type="subcellular location">
    <subcellularLocation>
        <location evidence="1">Secreted</location>
    </subcellularLocation>
</comment>
<comment type="similarity">
    <text evidence="5">Belongs to the polysaccharide lyase 3 family.</text>
</comment>
<feature type="signal peptide" evidence="2">
    <location>
        <begin position="1"/>
        <end position="25"/>
    </location>
</feature>
<feature type="chain" id="PRO_5000065163" description="Pectate lyase A">
    <location>
        <begin position="26"/>
        <end position="222"/>
    </location>
</feature>